<comment type="similarity">
    <text evidence="2">Belongs to the acetyltransferase family.</text>
</comment>
<comment type="sequence caution" evidence="2">
    <conflict type="frameshift">
        <sequence resource="EMBL-CDS" id="AAA97152"/>
    </conflict>
</comment>
<dbReference type="EC" id="2.3.1.-"/>
<dbReference type="EMBL" id="U14003">
    <property type="protein sequence ID" value="AAA97152.1"/>
    <property type="status" value="ALT_FRAME"/>
    <property type="molecule type" value="Genomic_DNA"/>
</dbReference>
<dbReference type="EMBL" id="U00096">
    <property type="protein sequence ID" value="AAT48245.1"/>
    <property type="molecule type" value="Genomic_DNA"/>
</dbReference>
<dbReference type="EMBL" id="AP009048">
    <property type="protein sequence ID" value="BAE78253.1"/>
    <property type="molecule type" value="Genomic_DNA"/>
</dbReference>
<dbReference type="PIR" id="S56481">
    <property type="entry name" value="S56481"/>
</dbReference>
<dbReference type="RefSeq" id="WP_001059402.1">
    <property type="nucleotide sequence ID" value="NZ_SSUR01000004.1"/>
</dbReference>
<dbReference type="RefSeq" id="YP_026287.1">
    <property type="nucleotide sequence ID" value="NC_000913.3"/>
</dbReference>
<dbReference type="SMR" id="P39337"/>
<dbReference type="BioGRID" id="4263237">
    <property type="interactions" value="14"/>
</dbReference>
<dbReference type="FunCoup" id="P39337">
    <property type="interactions" value="63"/>
</dbReference>
<dbReference type="STRING" id="511145.b4256"/>
<dbReference type="jPOST" id="P39337"/>
<dbReference type="PaxDb" id="511145-b4256"/>
<dbReference type="EnsemblBacteria" id="AAT48245">
    <property type="protein sequence ID" value="AAT48245"/>
    <property type="gene ID" value="b4256"/>
</dbReference>
<dbReference type="GeneID" id="948772"/>
<dbReference type="KEGG" id="ecj:JW5758"/>
<dbReference type="KEGG" id="eco:b4256"/>
<dbReference type="KEGG" id="ecoc:C3026_22960"/>
<dbReference type="PATRIC" id="fig|1411691.4.peg.2448"/>
<dbReference type="EchoBASE" id="EB2422"/>
<dbReference type="eggNOG" id="COG0456">
    <property type="taxonomic scope" value="Bacteria"/>
</dbReference>
<dbReference type="HOGENOM" id="CLU_013985_11_2_6"/>
<dbReference type="InParanoid" id="P39337"/>
<dbReference type="OMA" id="CYLETMP"/>
<dbReference type="OrthoDB" id="5419426at2"/>
<dbReference type="PhylomeDB" id="P39337"/>
<dbReference type="BioCyc" id="EcoCyc:G7886-MONOMER"/>
<dbReference type="PRO" id="PR:P39337"/>
<dbReference type="Proteomes" id="UP000000625">
    <property type="component" value="Chromosome"/>
</dbReference>
<dbReference type="GO" id="GO:0008080">
    <property type="term" value="F:N-acetyltransferase activity"/>
    <property type="evidence" value="ECO:0000266"/>
    <property type="project" value="EcoCyc"/>
</dbReference>
<dbReference type="CDD" id="cd04301">
    <property type="entry name" value="NAT_SF"/>
    <property type="match status" value="1"/>
</dbReference>
<dbReference type="Gene3D" id="3.40.630.30">
    <property type="match status" value="1"/>
</dbReference>
<dbReference type="InterPro" id="IPR016181">
    <property type="entry name" value="Acyl_CoA_acyltransferase"/>
</dbReference>
<dbReference type="InterPro" id="IPR000182">
    <property type="entry name" value="GNAT_dom"/>
</dbReference>
<dbReference type="InterPro" id="IPR050769">
    <property type="entry name" value="NAT_camello-type"/>
</dbReference>
<dbReference type="PANTHER" id="PTHR13947">
    <property type="entry name" value="GNAT FAMILY N-ACETYLTRANSFERASE"/>
    <property type="match status" value="1"/>
</dbReference>
<dbReference type="PANTHER" id="PTHR13947:SF37">
    <property type="entry name" value="LD18367P"/>
    <property type="match status" value="1"/>
</dbReference>
<dbReference type="Pfam" id="PF00583">
    <property type="entry name" value="Acetyltransf_1"/>
    <property type="match status" value="1"/>
</dbReference>
<dbReference type="SUPFAM" id="SSF55729">
    <property type="entry name" value="Acyl-CoA N-acyltransferases (Nat)"/>
    <property type="match status" value="1"/>
</dbReference>
<dbReference type="PROSITE" id="PS51186">
    <property type="entry name" value="GNAT"/>
    <property type="match status" value="1"/>
</dbReference>
<protein>
    <recommendedName>
        <fullName>Uncharacterized N-acetyltransferase YjgM</fullName>
        <ecNumber>2.3.1.-</ecNumber>
    </recommendedName>
</protein>
<keyword id="KW-0012">Acyltransferase</keyword>
<keyword id="KW-1185">Reference proteome</keyword>
<keyword id="KW-0808">Transferase</keyword>
<feature type="chain" id="PRO_0000074617" description="Uncharacterized N-acetyltransferase YjgM">
    <location>
        <begin position="1"/>
        <end position="167"/>
    </location>
</feature>
<feature type="domain" description="N-acetyltransferase" evidence="1">
    <location>
        <begin position="9"/>
        <end position="167"/>
    </location>
</feature>
<proteinExistence type="inferred from homology"/>
<organism>
    <name type="scientific">Escherichia coli (strain K12)</name>
    <dbReference type="NCBI Taxonomy" id="83333"/>
    <lineage>
        <taxon>Bacteria</taxon>
        <taxon>Pseudomonadati</taxon>
        <taxon>Pseudomonadota</taxon>
        <taxon>Gammaproteobacteria</taxon>
        <taxon>Enterobacterales</taxon>
        <taxon>Enterobacteriaceae</taxon>
        <taxon>Escherichia</taxon>
    </lineage>
</organism>
<accession>P39337</accession>
<accession>P76810</accession>
<accession>Q2M653</accession>
<accession>Q6BEW9</accession>
<gene>
    <name type="primary">yjgM</name>
    <name type="ordered locus">b4256</name>
    <name type="ordered locus">JW5758</name>
</gene>
<evidence type="ECO:0000255" key="1">
    <source>
        <dbReference type="PROSITE-ProRule" id="PRU00532"/>
    </source>
</evidence>
<evidence type="ECO:0000305" key="2"/>
<reference key="1">
    <citation type="journal article" date="1995" name="Nucleic Acids Res.">
        <title>Analysis of the Escherichia coli genome VI: DNA sequence of the region from 92.8 through 100 minutes.</title>
        <authorList>
            <person name="Burland V.D."/>
            <person name="Plunkett G. III"/>
            <person name="Sofia H.J."/>
            <person name="Daniels D.L."/>
            <person name="Blattner F.R."/>
        </authorList>
    </citation>
    <scope>NUCLEOTIDE SEQUENCE [LARGE SCALE GENOMIC DNA]</scope>
    <source>
        <strain>K12 / MG1655 / ATCC 47076</strain>
    </source>
</reference>
<reference key="2">
    <citation type="journal article" date="1997" name="Science">
        <title>The complete genome sequence of Escherichia coli K-12.</title>
        <authorList>
            <person name="Blattner F.R."/>
            <person name="Plunkett G. III"/>
            <person name="Bloch C.A."/>
            <person name="Perna N.T."/>
            <person name="Burland V."/>
            <person name="Riley M."/>
            <person name="Collado-Vides J."/>
            <person name="Glasner J.D."/>
            <person name="Rode C.K."/>
            <person name="Mayhew G.F."/>
            <person name="Gregor J."/>
            <person name="Davis N.W."/>
            <person name="Kirkpatrick H.A."/>
            <person name="Goeden M.A."/>
            <person name="Rose D.J."/>
            <person name="Mau B."/>
            <person name="Shao Y."/>
        </authorList>
    </citation>
    <scope>NUCLEOTIDE SEQUENCE [LARGE SCALE GENOMIC DNA]</scope>
    <source>
        <strain>K12 / MG1655 / ATCC 47076</strain>
    </source>
</reference>
<reference key="3">
    <citation type="journal article" date="2006" name="Nucleic Acids Res.">
        <title>Escherichia coli K-12: a cooperatively developed annotation snapshot -- 2005.</title>
        <authorList>
            <person name="Riley M."/>
            <person name="Abe T."/>
            <person name="Arnaud M.B."/>
            <person name="Berlyn M.K.B."/>
            <person name="Blattner F.R."/>
            <person name="Chaudhuri R.R."/>
            <person name="Glasner J.D."/>
            <person name="Horiuchi T."/>
            <person name="Keseler I.M."/>
            <person name="Kosuge T."/>
            <person name="Mori H."/>
            <person name="Perna N.T."/>
            <person name="Plunkett G. III"/>
            <person name="Rudd K.E."/>
            <person name="Serres M.H."/>
            <person name="Thomas G.H."/>
            <person name="Thomson N.R."/>
            <person name="Wishart D."/>
            <person name="Wanner B.L."/>
        </authorList>
    </citation>
    <scope>SEQUENCE REVISION</scope>
</reference>
<reference key="4">
    <citation type="journal article" date="2006" name="Mol. Syst. Biol.">
        <title>Highly accurate genome sequences of Escherichia coli K-12 strains MG1655 and W3110.</title>
        <authorList>
            <person name="Hayashi K."/>
            <person name="Morooka N."/>
            <person name="Yamamoto Y."/>
            <person name="Fujita K."/>
            <person name="Isono K."/>
            <person name="Choi S."/>
            <person name="Ohtsubo E."/>
            <person name="Baba T."/>
            <person name="Wanner B.L."/>
            <person name="Mori H."/>
            <person name="Horiuchi T."/>
        </authorList>
    </citation>
    <scope>NUCLEOTIDE SEQUENCE [LARGE SCALE GENOMIC DNA]</scope>
    <source>
        <strain>K12 / W3110 / ATCC 27325 / DSM 5911</strain>
    </source>
</reference>
<name>YJGM_ECOLI</name>
<sequence length="167" mass="18622">MNNIAPQSPVMRRLTLQDNPAIARVIRQVSAEYGLTADKGYTVADPNLDELYQVYSQPGHAYWVVEYEGEVVGGGGIAPLTGSESDICELQKMYFLPAIRGKGLAKKLALMAMEQAREMGFKRCYLETTAFLKEAIALYEHLGFEHIDYALGCTGHVDCEVRMLREL</sequence>